<comment type="function">
    <text evidence="1">Catalyzes the NADPH-dependent reduction of glyoxylate and hydroxypyruvate into glycolate and glycerate, respectively.</text>
</comment>
<comment type="catalytic activity">
    <reaction evidence="1">
        <text>glycolate + NADP(+) = glyoxylate + NADPH + H(+)</text>
        <dbReference type="Rhea" id="RHEA:10992"/>
        <dbReference type="ChEBI" id="CHEBI:15378"/>
        <dbReference type="ChEBI" id="CHEBI:29805"/>
        <dbReference type="ChEBI" id="CHEBI:36655"/>
        <dbReference type="ChEBI" id="CHEBI:57783"/>
        <dbReference type="ChEBI" id="CHEBI:58349"/>
        <dbReference type="EC" id="1.1.1.79"/>
    </reaction>
</comment>
<comment type="catalytic activity">
    <reaction evidence="1">
        <text>(R)-glycerate + NAD(+) = 3-hydroxypyruvate + NADH + H(+)</text>
        <dbReference type="Rhea" id="RHEA:17905"/>
        <dbReference type="ChEBI" id="CHEBI:15378"/>
        <dbReference type="ChEBI" id="CHEBI:16659"/>
        <dbReference type="ChEBI" id="CHEBI:17180"/>
        <dbReference type="ChEBI" id="CHEBI:57540"/>
        <dbReference type="ChEBI" id="CHEBI:57945"/>
        <dbReference type="EC" id="1.1.1.81"/>
    </reaction>
</comment>
<comment type="catalytic activity">
    <reaction evidence="1">
        <text>(R)-glycerate + NADP(+) = 3-hydroxypyruvate + NADPH + H(+)</text>
        <dbReference type="Rhea" id="RHEA:18657"/>
        <dbReference type="ChEBI" id="CHEBI:15378"/>
        <dbReference type="ChEBI" id="CHEBI:16659"/>
        <dbReference type="ChEBI" id="CHEBI:17180"/>
        <dbReference type="ChEBI" id="CHEBI:57783"/>
        <dbReference type="ChEBI" id="CHEBI:58349"/>
        <dbReference type="EC" id="1.1.1.81"/>
    </reaction>
</comment>
<comment type="subcellular location">
    <subcellularLocation>
        <location evidence="1">Cytoplasm</location>
    </subcellularLocation>
</comment>
<comment type="similarity">
    <text evidence="1">Belongs to the D-isomer specific 2-hydroxyacid dehydrogenase family. GhrA subfamily.</text>
</comment>
<proteinExistence type="inferred from homology"/>
<keyword id="KW-0963">Cytoplasm</keyword>
<keyword id="KW-0520">NAD</keyword>
<keyword id="KW-0521">NADP</keyword>
<keyword id="KW-0560">Oxidoreductase</keyword>
<accession>B7M907</accession>
<reference key="1">
    <citation type="journal article" date="2009" name="PLoS Genet.">
        <title>Organised genome dynamics in the Escherichia coli species results in highly diverse adaptive paths.</title>
        <authorList>
            <person name="Touchon M."/>
            <person name="Hoede C."/>
            <person name="Tenaillon O."/>
            <person name="Barbe V."/>
            <person name="Baeriswyl S."/>
            <person name="Bidet P."/>
            <person name="Bingen E."/>
            <person name="Bonacorsi S."/>
            <person name="Bouchier C."/>
            <person name="Bouvet O."/>
            <person name="Calteau A."/>
            <person name="Chiapello H."/>
            <person name="Clermont O."/>
            <person name="Cruveiller S."/>
            <person name="Danchin A."/>
            <person name="Diard M."/>
            <person name="Dossat C."/>
            <person name="Karoui M.E."/>
            <person name="Frapy E."/>
            <person name="Garry L."/>
            <person name="Ghigo J.M."/>
            <person name="Gilles A.M."/>
            <person name="Johnson J."/>
            <person name="Le Bouguenec C."/>
            <person name="Lescat M."/>
            <person name="Mangenot S."/>
            <person name="Martinez-Jehanne V."/>
            <person name="Matic I."/>
            <person name="Nassif X."/>
            <person name="Oztas S."/>
            <person name="Petit M.A."/>
            <person name="Pichon C."/>
            <person name="Rouy Z."/>
            <person name="Ruf C.S."/>
            <person name="Schneider D."/>
            <person name="Tourret J."/>
            <person name="Vacherie B."/>
            <person name="Vallenet D."/>
            <person name="Medigue C."/>
            <person name="Rocha E.P.C."/>
            <person name="Denamur E."/>
        </authorList>
    </citation>
    <scope>NUCLEOTIDE SEQUENCE [LARGE SCALE GENOMIC DNA]</scope>
    <source>
        <strain>IAI1</strain>
    </source>
</reference>
<dbReference type="EC" id="1.1.1.79" evidence="1"/>
<dbReference type="EC" id="1.1.1.81" evidence="1"/>
<dbReference type="EMBL" id="CU928160">
    <property type="protein sequence ID" value="CAQ97931.1"/>
    <property type="molecule type" value="Genomic_DNA"/>
</dbReference>
<dbReference type="RefSeq" id="WP_000351317.1">
    <property type="nucleotide sequence ID" value="NC_011741.1"/>
</dbReference>
<dbReference type="SMR" id="B7M907"/>
<dbReference type="GeneID" id="93776385"/>
<dbReference type="KEGG" id="ecr:ECIAI1_1067"/>
<dbReference type="HOGENOM" id="CLU_019796_1_0_6"/>
<dbReference type="GO" id="GO:0005829">
    <property type="term" value="C:cytosol"/>
    <property type="evidence" value="ECO:0007669"/>
    <property type="project" value="UniProtKB-ARBA"/>
</dbReference>
<dbReference type="GO" id="GO:0030267">
    <property type="term" value="F:glyoxylate reductase (NADPH) activity"/>
    <property type="evidence" value="ECO:0007669"/>
    <property type="project" value="UniProtKB-UniRule"/>
</dbReference>
<dbReference type="GO" id="GO:0008465">
    <property type="term" value="F:hydroxypyruvate reductase (NADH) activity"/>
    <property type="evidence" value="ECO:0007669"/>
    <property type="project" value="RHEA"/>
</dbReference>
<dbReference type="GO" id="GO:0120509">
    <property type="term" value="F:hydroxypyruvate reductase (NADPH) activity"/>
    <property type="evidence" value="ECO:0007669"/>
    <property type="project" value="RHEA"/>
</dbReference>
<dbReference type="GO" id="GO:0051287">
    <property type="term" value="F:NAD binding"/>
    <property type="evidence" value="ECO:0007669"/>
    <property type="project" value="InterPro"/>
</dbReference>
<dbReference type="CDD" id="cd12164">
    <property type="entry name" value="GDH_like_2"/>
    <property type="match status" value="1"/>
</dbReference>
<dbReference type="FunFam" id="3.40.50.720:FF:000110">
    <property type="entry name" value="Glyoxylate/hydroxypyruvate reductase A"/>
    <property type="match status" value="1"/>
</dbReference>
<dbReference type="Gene3D" id="3.40.50.720">
    <property type="entry name" value="NAD(P)-binding Rossmann-like Domain"/>
    <property type="match status" value="2"/>
</dbReference>
<dbReference type="HAMAP" id="MF_01666">
    <property type="entry name" value="2_Hacid_dh_C_GhrA"/>
    <property type="match status" value="1"/>
</dbReference>
<dbReference type="InterPro" id="IPR029753">
    <property type="entry name" value="D-isomer_DH_CS"/>
</dbReference>
<dbReference type="InterPro" id="IPR006140">
    <property type="entry name" value="D-isomer_DH_NAD-bd"/>
</dbReference>
<dbReference type="InterPro" id="IPR023514">
    <property type="entry name" value="GhrA_Enterobacterales"/>
</dbReference>
<dbReference type="InterPro" id="IPR036291">
    <property type="entry name" value="NAD(P)-bd_dom_sf"/>
</dbReference>
<dbReference type="NCBIfam" id="NF012013">
    <property type="entry name" value="PRK15469.1"/>
    <property type="match status" value="1"/>
</dbReference>
<dbReference type="PANTHER" id="PTHR43333">
    <property type="entry name" value="2-HACID_DH_C DOMAIN-CONTAINING PROTEIN"/>
    <property type="match status" value="1"/>
</dbReference>
<dbReference type="PANTHER" id="PTHR43333:SF1">
    <property type="entry name" value="D-ISOMER SPECIFIC 2-HYDROXYACID DEHYDROGENASE NAD-BINDING DOMAIN-CONTAINING PROTEIN"/>
    <property type="match status" value="1"/>
</dbReference>
<dbReference type="Pfam" id="PF02826">
    <property type="entry name" value="2-Hacid_dh_C"/>
    <property type="match status" value="1"/>
</dbReference>
<dbReference type="SUPFAM" id="SSF51735">
    <property type="entry name" value="NAD(P)-binding Rossmann-fold domains"/>
    <property type="match status" value="1"/>
</dbReference>
<dbReference type="PROSITE" id="PS00671">
    <property type="entry name" value="D_2_HYDROXYACID_DH_3"/>
    <property type="match status" value="1"/>
</dbReference>
<evidence type="ECO:0000255" key="1">
    <source>
        <dbReference type="HAMAP-Rule" id="MF_01666"/>
    </source>
</evidence>
<protein>
    <recommendedName>
        <fullName evidence="1">Glyoxylate/hydroxypyruvate reductase A</fullName>
        <ecNumber evidence="1">1.1.1.79</ecNumber>
        <ecNumber evidence="1">1.1.1.81</ecNumber>
    </recommendedName>
    <alternativeName>
        <fullName evidence="1">2-ketoacid reductase</fullName>
    </alternativeName>
</protein>
<organism>
    <name type="scientific">Escherichia coli O8 (strain IAI1)</name>
    <dbReference type="NCBI Taxonomy" id="585034"/>
    <lineage>
        <taxon>Bacteria</taxon>
        <taxon>Pseudomonadati</taxon>
        <taxon>Pseudomonadota</taxon>
        <taxon>Gammaproteobacteria</taxon>
        <taxon>Enterobacterales</taxon>
        <taxon>Enterobacteriaceae</taxon>
        <taxon>Escherichia</taxon>
    </lineage>
</organism>
<sequence length="312" mass="35343">MDIIFYHPTFDTQWWIEALRKAIPQARVRAWKSGDNDSADYALVWHPPVEMLAGRDLKAVFALGAGVDSILSKLQAHPEMLNPSVPLFRLEDTGMGEQMQEYAVSQVLHWFRRFDDYRIQQNSSHWQPLPEYHREDFTIGILGAGVLGSKVAQSLQTWRFPLRCWSRTRKSWPGVQSFAGREELSAFLSQCRVLINLLPNTPETVGIINQQLLEKLPDGAYLLNLARGVHVVEDDLLAALDSGKVKGAMLDVFNREPLPPESPLWQHPRVTITPHVAAITRPAEAVEYISRTIAQLEKGERVCGQVDRARGY</sequence>
<feature type="chain" id="PRO_1000187268" description="Glyoxylate/hydroxypyruvate reductase A">
    <location>
        <begin position="1"/>
        <end position="312"/>
    </location>
</feature>
<feature type="active site" evidence="1">
    <location>
        <position position="227"/>
    </location>
</feature>
<feature type="active site" description="Proton donor" evidence="1">
    <location>
        <position position="275"/>
    </location>
</feature>
<gene>
    <name evidence="1" type="primary">ghrA</name>
    <name type="ordered locus">ECIAI1_1067</name>
</gene>
<name>GHRA_ECO8A</name>